<keyword id="KW-0687">Ribonucleoprotein</keyword>
<keyword id="KW-0689">Ribosomal protein</keyword>
<feature type="chain" id="PRO_0000136877" description="Large ribosomal subunit protein eL24">
    <location>
        <begin position="1"/>
        <end position="156"/>
    </location>
</feature>
<feature type="region of interest" description="Disordered" evidence="1">
    <location>
        <begin position="110"/>
        <end position="156"/>
    </location>
</feature>
<feature type="compositionally biased region" description="Basic and acidic residues" evidence="1">
    <location>
        <begin position="110"/>
        <end position="123"/>
    </location>
</feature>
<comment type="similarity">
    <text evidence="2">Belongs to the eukaryotic ribosomal protein eL24 family.</text>
</comment>
<organism>
    <name type="scientific">Schistosoma japonicum</name>
    <name type="common">Blood fluke</name>
    <dbReference type="NCBI Taxonomy" id="6182"/>
    <lineage>
        <taxon>Eukaryota</taxon>
        <taxon>Metazoa</taxon>
        <taxon>Spiralia</taxon>
        <taxon>Lophotrochozoa</taxon>
        <taxon>Platyhelminthes</taxon>
        <taxon>Trematoda</taxon>
        <taxon>Digenea</taxon>
        <taxon>Strigeidida</taxon>
        <taxon>Schistosomatoidea</taxon>
        <taxon>Schistosomatidae</taxon>
        <taxon>Schistosoma</taxon>
    </lineage>
</organism>
<proteinExistence type="evidence at transcript level"/>
<sequence>MKLEVCSYSGFKVYPGHGKRVIRVDGRSFYFINKKSERSHYLKRNPREISWTVLYRRKYKKGMSEEQTKNELSVLTKTARGIAGASLAEIMAKRNQKPEVRKAMRDQAIRAAKEKQKQKELEKKAKKVEKKKPTLAPKQKAAKITQKPAPRVGGKR</sequence>
<accession>Q7Z0T8</accession>
<gene>
    <name type="primary">RPL24</name>
</gene>
<dbReference type="EMBL" id="AY307168">
    <property type="protein sequence ID" value="AAP73465.1"/>
    <property type="molecule type" value="mRNA"/>
</dbReference>
<dbReference type="SMR" id="Q7Z0T8"/>
<dbReference type="GO" id="GO:0022625">
    <property type="term" value="C:cytosolic large ribosomal subunit"/>
    <property type="evidence" value="ECO:0007669"/>
    <property type="project" value="TreeGrafter"/>
</dbReference>
<dbReference type="GO" id="GO:0003729">
    <property type="term" value="F:mRNA binding"/>
    <property type="evidence" value="ECO:0007669"/>
    <property type="project" value="TreeGrafter"/>
</dbReference>
<dbReference type="GO" id="GO:0003735">
    <property type="term" value="F:structural constituent of ribosome"/>
    <property type="evidence" value="ECO:0007669"/>
    <property type="project" value="InterPro"/>
</dbReference>
<dbReference type="GO" id="GO:0002181">
    <property type="term" value="P:cytoplasmic translation"/>
    <property type="evidence" value="ECO:0007669"/>
    <property type="project" value="TreeGrafter"/>
</dbReference>
<dbReference type="CDD" id="cd00472">
    <property type="entry name" value="Ribosomal_L24e_L24"/>
    <property type="match status" value="1"/>
</dbReference>
<dbReference type="FunFam" id="2.30.170.20:FF:000002">
    <property type="entry name" value="60S ribosomal protein L24"/>
    <property type="match status" value="1"/>
</dbReference>
<dbReference type="Gene3D" id="6.10.250.1270">
    <property type="match status" value="1"/>
</dbReference>
<dbReference type="Gene3D" id="2.30.170.20">
    <property type="entry name" value="Ribosomal protein L24e"/>
    <property type="match status" value="1"/>
</dbReference>
<dbReference type="InterPro" id="IPR038630">
    <property type="entry name" value="L24e/L24_sf"/>
</dbReference>
<dbReference type="InterPro" id="IPR056366">
    <property type="entry name" value="Ribosomal_eL24"/>
</dbReference>
<dbReference type="InterPro" id="IPR000988">
    <property type="entry name" value="Ribosomal_eL24-rel_N"/>
</dbReference>
<dbReference type="InterPro" id="IPR023442">
    <property type="entry name" value="Ribosomal_eL24_CS"/>
</dbReference>
<dbReference type="PANTHER" id="PTHR10792">
    <property type="entry name" value="60S RIBOSOMAL PROTEIN L24"/>
    <property type="match status" value="1"/>
</dbReference>
<dbReference type="PANTHER" id="PTHR10792:SF1">
    <property type="entry name" value="RIBOSOMAL PROTEIN L24"/>
    <property type="match status" value="1"/>
</dbReference>
<dbReference type="Pfam" id="PF01246">
    <property type="entry name" value="Ribosomal_L24e"/>
    <property type="match status" value="1"/>
</dbReference>
<dbReference type="SUPFAM" id="SSF57716">
    <property type="entry name" value="Glucocorticoid receptor-like (DNA-binding domain)"/>
    <property type="match status" value="1"/>
</dbReference>
<dbReference type="PROSITE" id="PS01073">
    <property type="entry name" value="RIBOSOMAL_L24E"/>
    <property type="match status" value="1"/>
</dbReference>
<evidence type="ECO:0000256" key="1">
    <source>
        <dbReference type="SAM" id="MobiDB-lite"/>
    </source>
</evidence>
<evidence type="ECO:0000305" key="2"/>
<reference key="1">
    <citation type="submission" date="2003-05" db="EMBL/GenBank/DDBJ databases">
        <title>Acquisition and analysis of 18 new genes of Schistosoma japonicum.</title>
        <authorList>
            <person name="Zeng Q."/>
            <person name="Wan Z."/>
            <person name="Yang S."/>
            <person name="Xiao J."/>
        </authorList>
    </citation>
    <scope>NUCLEOTIDE SEQUENCE [MRNA]</scope>
</reference>
<protein>
    <recommendedName>
        <fullName evidence="2">Large ribosomal subunit protein eL24</fullName>
    </recommendedName>
    <alternativeName>
        <fullName>60S ribosomal protein L24</fullName>
    </alternativeName>
</protein>
<name>RL24_SCHJA</name>